<proteinExistence type="inferred from homology"/>
<evidence type="ECO:0000250" key="1"/>
<evidence type="ECO:0000305" key="2"/>
<dbReference type="EMBL" id="AAHF01000008">
    <property type="protein sequence ID" value="EAL87418.1"/>
    <property type="molecule type" value="Genomic_DNA"/>
</dbReference>
<dbReference type="RefSeq" id="XP_749456.1">
    <property type="nucleotide sequence ID" value="XM_744363.1"/>
</dbReference>
<dbReference type="SMR" id="Q4WI37"/>
<dbReference type="FunCoup" id="Q4WI37">
    <property type="interactions" value="492"/>
</dbReference>
<dbReference type="STRING" id="330879.Q4WI37"/>
<dbReference type="EnsemblFungi" id="EAL87418">
    <property type="protein sequence ID" value="EAL87418"/>
    <property type="gene ID" value="AFUA_2G03210"/>
</dbReference>
<dbReference type="GeneID" id="3506708"/>
<dbReference type="KEGG" id="afm:AFUA_2G03210"/>
<dbReference type="VEuPathDB" id="FungiDB:Afu2g03210"/>
<dbReference type="eggNOG" id="KOG4066">
    <property type="taxonomic scope" value="Eukaryota"/>
</dbReference>
<dbReference type="HOGENOM" id="CLU_065847_1_0_1"/>
<dbReference type="InParanoid" id="Q4WI37"/>
<dbReference type="OMA" id="IVCRMST"/>
<dbReference type="OrthoDB" id="329139at2759"/>
<dbReference type="Proteomes" id="UP000002530">
    <property type="component" value="Chromosome 2"/>
</dbReference>
<dbReference type="GO" id="GO:0000781">
    <property type="term" value="C:chromosome, telomeric region"/>
    <property type="evidence" value="ECO:0007669"/>
    <property type="project" value="UniProtKB-SubCell"/>
</dbReference>
<dbReference type="GO" id="GO:0005829">
    <property type="term" value="C:cytosol"/>
    <property type="evidence" value="ECO:0000318"/>
    <property type="project" value="GO_Central"/>
</dbReference>
<dbReference type="GO" id="GO:0000408">
    <property type="term" value="C:EKC/KEOPS complex"/>
    <property type="evidence" value="ECO:0000318"/>
    <property type="project" value="GO_Central"/>
</dbReference>
<dbReference type="GO" id="GO:0005634">
    <property type="term" value="C:nucleus"/>
    <property type="evidence" value="ECO:0000318"/>
    <property type="project" value="GO_Central"/>
</dbReference>
<dbReference type="GO" id="GO:0002949">
    <property type="term" value="P:tRNA threonylcarbamoyladenosine modification"/>
    <property type="evidence" value="ECO:0000318"/>
    <property type="project" value="GO_Central"/>
</dbReference>
<dbReference type="Gene3D" id="3.30.2380.10">
    <property type="entry name" value="CGI121/TPRKB"/>
    <property type="match status" value="1"/>
</dbReference>
<dbReference type="InterPro" id="IPR013926">
    <property type="entry name" value="CGI121/TPRKB"/>
</dbReference>
<dbReference type="InterPro" id="IPR036504">
    <property type="entry name" value="CGI121/TPRKB_sf"/>
</dbReference>
<dbReference type="PANTHER" id="PTHR15840">
    <property type="entry name" value="CGI-121 FAMILY MEMBER"/>
    <property type="match status" value="1"/>
</dbReference>
<dbReference type="PANTHER" id="PTHR15840:SF10">
    <property type="entry name" value="EKC_KEOPS COMPLEX SUBUNIT TPRKB"/>
    <property type="match status" value="1"/>
</dbReference>
<dbReference type="Pfam" id="PF08617">
    <property type="entry name" value="CGI-121"/>
    <property type="match status" value="1"/>
</dbReference>
<dbReference type="SUPFAM" id="SSF143870">
    <property type="entry name" value="PF0523-like"/>
    <property type="match status" value="1"/>
</dbReference>
<organism>
    <name type="scientific">Aspergillus fumigatus (strain ATCC MYA-4609 / CBS 101355 / FGSC A1100 / Af293)</name>
    <name type="common">Neosartorya fumigata</name>
    <dbReference type="NCBI Taxonomy" id="330879"/>
    <lineage>
        <taxon>Eukaryota</taxon>
        <taxon>Fungi</taxon>
        <taxon>Dikarya</taxon>
        <taxon>Ascomycota</taxon>
        <taxon>Pezizomycotina</taxon>
        <taxon>Eurotiomycetes</taxon>
        <taxon>Eurotiomycetidae</taxon>
        <taxon>Eurotiales</taxon>
        <taxon>Aspergillaceae</taxon>
        <taxon>Aspergillus</taxon>
        <taxon>Aspergillus subgen. Fumigati</taxon>
    </lineage>
</organism>
<feature type="chain" id="PRO_0000279206" description="EKC/KEOPS complex subunit cgi121">
    <location>
        <begin position="1"/>
        <end position="189"/>
    </location>
</feature>
<protein>
    <recommendedName>
        <fullName>EKC/KEOPS complex subunit cgi121</fullName>
    </recommendedName>
</protein>
<name>CG121_ASPFU</name>
<sequence length="189" mass="20841">MTLPLETIRLPHLPSALPVHIALYRDVNNSPFLRQQLLSGNADFEYAFIDASMVFSRSHILSAIFRAVNDHLNGRLKSRNVHSEIVFSLSPANNIADSFRKFGITDSTTDLLVVKVSVTPDVTHASVATHLQQYIEGSPVPFADETLSEISDISKIKKAYKLGTLGSRDDEKRRLELSLIGAIALRGAT</sequence>
<gene>
    <name type="primary">cgi121</name>
    <name type="ORF">AFUA_2G03210</name>
</gene>
<accession>Q4WI37</accession>
<keyword id="KW-0010">Activator</keyword>
<keyword id="KW-0158">Chromosome</keyword>
<keyword id="KW-0539">Nucleus</keyword>
<keyword id="KW-1185">Reference proteome</keyword>
<keyword id="KW-0779">Telomere</keyword>
<keyword id="KW-0804">Transcription</keyword>
<keyword id="KW-0805">Transcription regulation</keyword>
<keyword id="KW-0819">tRNA processing</keyword>
<reference key="1">
    <citation type="journal article" date="2005" name="Nature">
        <title>Genomic sequence of the pathogenic and allergenic filamentous fungus Aspergillus fumigatus.</title>
        <authorList>
            <person name="Nierman W.C."/>
            <person name="Pain A."/>
            <person name="Anderson M.J."/>
            <person name="Wortman J.R."/>
            <person name="Kim H.S."/>
            <person name="Arroyo J."/>
            <person name="Berriman M."/>
            <person name="Abe K."/>
            <person name="Archer D.B."/>
            <person name="Bermejo C."/>
            <person name="Bennett J.W."/>
            <person name="Bowyer P."/>
            <person name="Chen D."/>
            <person name="Collins M."/>
            <person name="Coulsen R."/>
            <person name="Davies R."/>
            <person name="Dyer P.S."/>
            <person name="Farman M.L."/>
            <person name="Fedorova N."/>
            <person name="Fedorova N.D."/>
            <person name="Feldblyum T.V."/>
            <person name="Fischer R."/>
            <person name="Fosker N."/>
            <person name="Fraser A."/>
            <person name="Garcia J.L."/>
            <person name="Garcia M.J."/>
            <person name="Goble A."/>
            <person name="Goldman G.H."/>
            <person name="Gomi K."/>
            <person name="Griffith-Jones S."/>
            <person name="Gwilliam R."/>
            <person name="Haas B.J."/>
            <person name="Haas H."/>
            <person name="Harris D.E."/>
            <person name="Horiuchi H."/>
            <person name="Huang J."/>
            <person name="Humphray S."/>
            <person name="Jimenez J."/>
            <person name="Keller N."/>
            <person name="Khouri H."/>
            <person name="Kitamoto K."/>
            <person name="Kobayashi T."/>
            <person name="Konzack S."/>
            <person name="Kulkarni R."/>
            <person name="Kumagai T."/>
            <person name="Lafton A."/>
            <person name="Latge J.-P."/>
            <person name="Li W."/>
            <person name="Lord A."/>
            <person name="Lu C."/>
            <person name="Majoros W.H."/>
            <person name="May G.S."/>
            <person name="Miller B.L."/>
            <person name="Mohamoud Y."/>
            <person name="Molina M."/>
            <person name="Monod M."/>
            <person name="Mouyna I."/>
            <person name="Mulligan S."/>
            <person name="Murphy L.D."/>
            <person name="O'Neil S."/>
            <person name="Paulsen I."/>
            <person name="Penalva M.A."/>
            <person name="Pertea M."/>
            <person name="Price C."/>
            <person name="Pritchard B.L."/>
            <person name="Quail M.A."/>
            <person name="Rabbinowitsch E."/>
            <person name="Rawlins N."/>
            <person name="Rajandream M.A."/>
            <person name="Reichard U."/>
            <person name="Renauld H."/>
            <person name="Robson G.D."/>
            <person name="Rodriguez de Cordoba S."/>
            <person name="Rodriguez-Pena J.M."/>
            <person name="Ronning C.M."/>
            <person name="Rutter S."/>
            <person name="Salzberg S.L."/>
            <person name="Sanchez M."/>
            <person name="Sanchez-Ferrero J.C."/>
            <person name="Saunders D."/>
            <person name="Seeger K."/>
            <person name="Squares R."/>
            <person name="Squares S."/>
            <person name="Takeuchi M."/>
            <person name="Tekaia F."/>
            <person name="Turner G."/>
            <person name="Vazquez de Aldana C.R."/>
            <person name="Weidman J."/>
            <person name="White O."/>
            <person name="Woodward J.R."/>
            <person name="Yu J.-H."/>
            <person name="Fraser C.M."/>
            <person name="Galagan J.E."/>
            <person name="Asai K."/>
            <person name="Machida M."/>
            <person name="Hall N."/>
            <person name="Barrell B.G."/>
            <person name="Denning D.W."/>
        </authorList>
    </citation>
    <scope>NUCLEOTIDE SEQUENCE [LARGE SCALE GENOMIC DNA]</scope>
    <source>
        <strain>ATCC MYA-4609 / CBS 101355 / FGSC A1100 / Af293</strain>
    </source>
</reference>
<comment type="function">
    <text evidence="1">Component of the EKC/KEOPS complex that is required for the formation of a threonylcarbamoyl group on adenosine at position 37 (t(6)A37) in tRNAs that read codons beginning with adenine. The complex is probably involved in the transfer of the threonylcarbamoyl moiety of threonylcarbamoyl-AMP (TC-AMP) to the N6 group of A37. Cgi121 acts as an allosteric effector that regulates the t(6)A activity of the complex. The EKC/KEOPS complex also promotes both telomere uncapping and telomere elongation. The complex is required for efficient recruitment of transcriptional coactivators. Cgi121 is not required for tRNA modification (By similarity).</text>
</comment>
<comment type="subunit">
    <text evidence="1">Component of the EKC/KEOPS complex composed of at least bud32, cgi121, gon7, kae1 and pcc1; the whole complex dimerizes.</text>
</comment>
<comment type="subcellular location">
    <subcellularLocation>
        <location evidence="1">Nucleus</location>
    </subcellularLocation>
    <subcellularLocation>
        <location evidence="1">Chromosome</location>
        <location evidence="1">Telomere</location>
    </subcellularLocation>
</comment>
<comment type="similarity">
    <text evidence="2">Belongs to the CGI121/TPRKB family.</text>
</comment>